<dbReference type="EMBL" id="KF785812">
    <property type="protein sequence ID" value="AHI07398.1"/>
    <property type="molecule type" value="mRNA"/>
</dbReference>
<dbReference type="InterPro" id="IPR053346">
    <property type="entry name" value="Fra_a_1-associated"/>
</dbReference>
<dbReference type="PANTHER" id="PTHR35722">
    <property type="entry name" value="MAL D 1-ASSOCIATED PROTEIN"/>
    <property type="match status" value="1"/>
</dbReference>
<dbReference type="PANTHER" id="PTHR35722:SF1">
    <property type="entry name" value="MAL D 1-ASSOCIATED PROTEIN"/>
    <property type="match status" value="1"/>
</dbReference>
<sequence>MGWVWKDDDEQGGHVNPSAADISPRLDGDRCSTRKVVRTQCKTEEVEPGKFIRKCEKTEEVLRDCVGRPIEVVQSNKEYTEDDVTDQVMKGSVSFGSADNGAFNFPGLQHDIDEIEHNFLGGLSRFFEAAEDMKNGFFSSFGIPHIFDEGPSTSLPSPRREIPIDSPRQLEAFQKAYGTKSGEVDLSGLARDV</sequence>
<comment type="subunit">
    <text evidence="2">Interacts with FRAA1E, FRAA2 and FRAA3.</text>
</comment>
<proteinExistence type="evidence at protein level"/>
<protein>
    <recommendedName>
        <fullName evidence="3">Fra a 1-associated protein</fullName>
        <shortName evidence="3">FaAP</shortName>
    </recommendedName>
</protein>
<accession>W5X2N3</accession>
<evidence type="ECO:0000256" key="1">
    <source>
        <dbReference type="SAM" id="MobiDB-lite"/>
    </source>
</evidence>
<evidence type="ECO:0000269" key="2">
    <source>
    </source>
</evidence>
<evidence type="ECO:0000303" key="3">
    <source>
    </source>
</evidence>
<name>AP_FRAAN</name>
<reference key="1">
    <citation type="journal article" date="2017" name="Proteins">
        <title>Physical interaction between the strawberry allergen Fra a 1 and an associated partner FaAP: Interaction of Fra a 1 proteins and FaAP.</title>
        <authorList>
            <person name="Franz-Oberdorf K."/>
            <person name="Langer A."/>
            <person name="Strasser R."/>
            <person name="Isono E."/>
            <person name="Ranftl Q.L."/>
            <person name="Wunschel C."/>
            <person name="Schwab W."/>
        </authorList>
    </citation>
    <scope>NUCLEOTIDE SEQUENCE [MRNA]</scope>
    <scope>INTERACTION WITH FRAA1E; FRAA2 AND FRAA3</scope>
</reference>
<organism>
    <name type="scientific">Fragaria ananassa</name>
    <name type="common">Strawberry</name>
    <name type="synonym">Fragaria chiloensis x Fragaria virginiana</name>
    <dbReference type="NCBI Taxonomy" id="3747"/>
    <lineage>
        <taxon>Eukaryota</taxon>
        <taxon>Viridiplantae</taxon>
        <taxon>Streptophyta</taxon>
        <taxon>Embryophyta</taxon>
        <taxon>Tracheophyta</taxon>
        <taxon>Spermatophyta</taxon>
        <taxon>Magnoliopsida</taxon>
        <taxon>eudicotyledons</taxon>
        <taxon>Gunneridae</taxon>
        <taxon>Pentapetalae</taxon>
        <taxon>rosids</taxon>
        <taxon>fabids</taxon>
        <taxon>Rosales</taxon>
        <taxon>Rosaceae</taxon>
        <taxon>Rosoideae</taxon>
        <taxon>Potentilleae</taxon>
        <taxon>Fragariinae</taxon>
        <taxon>Fragaria</taxon>
    </lineage>
</organism>
<gene>
    <name evidence="3" type="primary">AP</name>
</gene>
<feature type="chain" id="PRO_0000447022" description="Fra a 1-associated protein">
    <location>
        <begin position="1"/>
        <end position="193"/>
    </location>
</feature>
<feature type="region of interest" description="Disordered" evidence="1">
    <location>
        <begin position="1"/>
        <end position="27"/>
    </location>
</feature>